<accession>Q48216</accession>
<protein>
    <recommendedName>
        <fullName>Outer membrane protein P2</fullName>
        <shortName>OMP P2</shortName>
    </recommendedName>
</protein>
<keyword id="KW-0998">Cell outer membrane</keyword>
<keyword id="KW-0406">Ion transport</keyword>
<keyword id="KW-0472">Membrane</keyword>
<keyword id="KW-0626">Porin</keyword>
<keyword id="KW-0732">Signal</keyword>
<keyword id="KW-0812">Transmembrane</keyword>
<keyword id="KW-1134">Transmembrane beta strand</keyword>
<keyword id="KW-0813">Transport</keyword>
<reference key="1">
    <citation type="journal article" date="1993" name="Microb. Pathog.">
        <title>Genetic analysis of the diversity in outer membrane protein P2 of non-encapsulated Haemophilus influenzae.</title>
        <authorList>
            <person name="Duim B."/>
            <person name="Dankert J."/>
            <person name="Jansen H.M."/>
            <person name="van Alphen L."/>
        </authorList>
    </citation>
    <scope>NUCLEOTIDE SEQUENCE [GENOMIC DNA]</scope>
    <source>
        <strain>A1/A850043</strain>
    </source>
</reference>
<evidence type="ECO:0000250" key="1"/>
<evidence type="ECO:0000305" key="2"/>
<proteinExistence type="inferred from homology"/>
<organism>
    <name type="scientific">Haemophilus influenzae</name>
    <dbReference type="NCBI Taxonomy" id="727"/>
    <lineage>
        <taxon>Bacteria</taxon>
        <taxon>Pseudomonadati</taxon>
        <taxon>Pseudomonadota</taxon>
        <taxon>Gammaproteobacteria</taxon>
        <taxon>Pasteurellales</taxon>
        <taxon>Pasteurellaceae</taxon>
        <taxon>Haemophilus</taxon>
    </lineage>
</organism>
<feature type="signal peptide">
    <location>
        <begin position="1"/>
        <end position="20"/>
    </location>
</feature>
<feature type="chain" id="PRO_0000025263" description="Outer membrane protein P2">
    <location>
        <begin position="21"/>
        <end position="360"/>
    </location>
</feature>
<name>OPP26_HAEIF</name>
<gene>
    <name type="primary">ompP2</name>
</gene>
<comment type="function">
    <text evidence="1">Forms pores that allow passive diffusion of small molecules across the outer membrane.</text>
</comment>
<comment type="subunit">
    <text evidence="1">Homotrimer.</text>
</comment>
<comment type="subcellular location">
    <subcellularLocation>
        <location>Cell outer membrane</location>
        <topology>Multi-pass membrane protein</topology>
    </subcellularLocation>
</comment>
<comment type="similarity">
    <text evidence="2">Belongs to the Gram-negative porin family.</text>
</comment>
<sequence length="360" mass="39618">MKKTLAALIVGAFAASAANAAVVYNNEGTNVELGGRLSVIAEQSNSTRKDQKQQHGELRNAGSRFHIKATHNFGDGFYAQGYLETRLVSDYQSSSDNFGNIITKYAYVTLGNKGFGEVKLGRAKTISDGITSAEDKEYGVLENKEYIPKDGNSVGYTFKGIDGLVLGANYLLAQKREAYKTATATPGEVIAQVISNGVQVGAKYDANNIIAGIAYGRTNYREDLATQDKSGKKQQVNGALSTLGYRFSDLGLLVSLDSGYAKTKNYKDKHEKRYFVSPGFQYELMEDTNVYGNFKYERNSVDQGKKAREHAVLFGVDHKLHKQVLTYIEGAYARTRTNDKGKTEKTEKEKSVGVGLRVYF</sequence>
<dbReference type="EMBL" id="X73387">
    <property type="protein sequence ID" value="CAA51804.1"/>
    <property type="molecule type" value="Genomic_DNA"/>
</dbReference>
<dbReference type="RefSeq" id="WP_042602103.1">
    <property type="nucleotide sequence ID" value="NZ_JXLY01000021.1"/>
</dbReference>
<dbReference type="SMR" id="Q48216"/>
<dbReference type="GO" id="GO:0009279">
    <property type="term" value="C:cell outer membrane"/>
    <property type="evidence" value="ECO:0007669"/>
    <property type="project" value="UniProtKB-SubCell"/>
</dbReference>
<dbReference type="GO" id="GO:0046930">
    <property type="term" value="C:pore complex"/>
    <property type="evidence" value="ECO:0007669"/>
    <property type="project" value="UniProtKB-KW"/>
</dbReference>
<dbReference type="GO" id="GO:0015288">
    <property type="term" value="F:porin activity"/>
    <property type="evidence" value="ECO:0007669"/>
    <property type="project" value="UniProtKB-KW"/>
</dbReference>
<dbReference type="GO" id="GO:0006811">
    <property type="term" value="P:monoatomic ion transport"/>
    <property type="evidence" value="ECO:0007669"/>
    <property type="project" value="UniProtKB-KW"/>
</dbReference>
<dbReference type="CDD" id="cd00342">
    <property type="entry name" value="gram_neg_porins"/>
    <property type="match status" value="1"/>
</dbReference>
<dbReference type="Gene3D" id="2.40.160.10">
    <property type="entry name" value="Porin"/>
    <property type="match status" value="1"/>
</dbReference>
<dbReference type="InterPro" id="IPR050298">
    <property type="entry name" value="Gram-neg_bact_OMP"/>
</dbReference>
<dbReference type="InterPro" id="IPR033900">
    <property type="entry name" value="Gram_neg_porin_domain"/>
</dbReference>
<dbReference type="InterPro" id="IPR023614">
    <property type="entry name" value="Porin_dom_sf"/>
</dbReference>
<dbReference type="PANTHER" id="PTHR34501:SF2">
    <property type="entry name" value="OUTER MEMBRANE PORIN F-RELATED"/>
    <property type="match status" value="1"/>
</dbReference>
<dbReference type="PANTHER" id="PTHR34501">
    <property type="entry name" value="PROTEIN YDDL-RELATED"/>
    <property type="match status" value="1"/>
</dbReference>
<dbReference type="Pfam" id="PF13609">
    <property type="entry name" value="Porin_4"/>
    <property type="match status" value="1"/>
</dbReference>
<dbReference type="SUPFAM" id="SSF56935">
    <property type="entry name" value="Porins"/>
    <property type="match status" value="1"/>
</dbReference>